<reference key="1">
    <citation type="journal article" date="1986" name="J. Biol. Chem.">
        <title>Structure of the lc and nmpC outer membrane porin protein genes of lambdoid bacteriophage.</title>
        <authorList>
            <person name="Blasband A.J."/>
            <person name="Marcotte W.R. Jr."/>
            <person name="Schnaitman C.A."/>
        </authorList>
    </citation>
    <scope>NUCLEOTIDE SEQUENCE [GENOMIC DNA]</scope>
</reference>
<dbReference type="EMBL" id="J02580">
    <property type="protein sequence ID" value="AAA32301.1"/>
    <property type="molecule type" value="Genomic_DNA"/>
</dbReference>
<dbReference type="PIR" id="D25647">
    <property type="entry name" value="MMBPP2"/>
</dbReference>
<dbReference type="SMR" id="P07238"/>
<dbReference type="TCDB" id="1.B.1.1.5">
    <property type="family name" value="the general bacterial porin (gbp) family"/>
</dbReference>
<dbReference type="GO" id="GO:0020002">
    <property type="term" value="C:host cell plasma membrane"/>
    <property type="evidence" value="ECO:0007669"/>
    <property type="project" value="UniProtKB-SubCell"/>
</dbReference>
<dbReference type="GO" id="GO:0046930">
    <property type="term" value="C:pore complex"/>
    <property type="evidence" value="ECO:0007669"/>
    <property type="project" value="UniProtKB-KW"/>
</dbReference>
<dbReference type="GO" id="GO:0015288">
    <property type="term" value="F:porin activity"/>
    <property type="evidence" value="ECO:0007669"/>
    <property type="project" value="UniProtKB-KW"/>
</dbReference>
<dbReference type="GO" id="GO:0034220">
    <property type="term" value="P:monoatomic ion transmembrane transport"/>
    <property type="evidence" value="ECO:0007669"/>
    <property type="project" value="InterPro"/>
</dbReference>
<dbReference type="CDD" id="cd00342">
    <property type="entry name" value="gram_neg_porins"/>
    <property type="match status" value="1"/>
</dbReference>
<dbReference type="Gene3D" id="2.40.160.10">
    <property type="entry name" value="Porin"/>
    <property type="match status" value="1"/>
</dbReference>
<dbReference type="InterPro" id="IPR050298">
    <property type="entry name" value="Gram-neg_bact_OMP"/>
</dbReference>
<dbReference type="InterPro" id="IPR033900">
    <property type="entry name" value="Gram_neg_porin_domain"/>
</dbReference>
<dbReference type="InterPro" id="IPR023614">
    <property type="entry name" value="Porin_dom_sf"/>
</dbReference>
<dbReference type="InterPro" id="IPR001897">
    <property type="entry name" value="Porin_gammaproteobac"/>
</dbReference>
<dbReference type="InterPro" id="IPR001702">
    <property type="entry name" value="Porin_Gram-ve"/>
</dbReference>
<dbReference type="InterPro" id="IPR013793">
    <property type="entry name" value="Porin_Gram-ve_CS"/>
</dbReference>
<dbReference type="NCBIfam" id="NF007841">
    <property type="entry name" value="PRK10554.1"/>
    <property type="match status" value="1"/>
</dbReference>
<dbReference type="PANTHER" id="PTHR34501:SF2">
    <property type="entry name" value="OUTER MEMBRANE PORIN F-RELATED"/>
    <property type="match status" value="1"/>
</dbReference>
<dbReference type="PANTHER" id="PTHR34501">
    <property type="entry name" value="PROTEIN YDDL-RELATED"/>
    <property type="match status" value="1"/>
</dbReference>
<dbReference type="Pfam" id="PF00267">
    <property type="entry name" value="Porin_1"/>
    <property type="match status" value="1"/>
</dbReference>
<dbReference type="PRINTS" id="PR00183">
    <property type="entry name" value="ECOLIPORIN"/>
</dbReference>
<dbReference type="PRINTS" id="PR00182">
    <property type="entry name" value="ECOLNEIPORIN"/>
</dbReference>
<dbReference type="SUPFAM" id="SSF56935">
    <property type="entry name" value="Porins"/>
    <property type="match status" value="1"/>
</dbReference>
<dbReference type="PROSITE" id="PS00576">
    <property type="entry name" value="GRAM_NEG_PORIN"/>
    <property type="match status" value="1"/>
</dbReference>
<keyword id="KW-1033">Host cell outer membrane</keyword>
<keyword id="KW-1043">Host membrane</keyword>
<keyword id="KW-0406">Ion transport</keyword>
<keyword id="KW-0472">Membrane</keyword>
<keyword id="KW-0626">Porin</keyword>
<keyword id="KW-0732">Signal</keyword>
<keyword id="KW-0812">Transmembrane</keyword>
<keyword id="KW-1134">Transmembrane beta strand</keyword>
<keyword id="KW-0813">Transport</keyword>
<gene>
    <name type="primary">LC</name>
</gene>
<organism>
    <name type="scientific">Enterobacteria phage PA-2</name>
    <name type="common">Bacteriophage PA-2</name>
    <dbReference type="NCBI Taxonomy" id="10738"/>
    <lineage>
        <taxon>Viruses</taxon>
        <taxon>Duplodnaviria</taxon>
        <taxon>Heunggongvirae</taxon>
        <taxon>Uroviricota</taxon>
        <taxon>Caudoviricetes</taxon>
        <taxon>Lambdavirus</taxon>
    </lineage>
</organism>
<comment type="function">
    <text>Forms pores that allow passive diffusion of small molecules across the host cell outer membrane.</text>
</comment>
<comment type="subunit">
    <text evidence="1">Homotrimer.</text>
</comment>
<comment type="subcellular location">
    <subcellularLocation>
        <location evidence="1">Host cell outer membrane</location>
        <topology evidence="1">Multi-pass membrane protein</topology>
    </subcellularLocation>
</comment>
<comment type="miscellaneous">
    <text>A porin gene can also be found in the genomes of certain lambdoid bacteriophage, and its protein is expressed in the lysogenic state. In E.coli the expression of ompC and ompF proteins is then reduced substantially.</text>
</comment>
<comment type="similarity">
    <text evidence="2">Belongs to the Gram-negative porin family.</text>
</comment>
<evidence type="ECO:0000250" key="1"/>
<evidence type="ECO:0000305" key="2"/>
<name>PORI_BPPA2</name>
<proteinExistence type="inferred from homology"/>
<feature type="signal peptide">
    <location>
        <begin position="1"/>
        <end position="23"/>
    </location>
</feature>
<feature type="chain" id="PRO_0000025253" description="Outer membrane porin protein LC">
    <location>
        <begin position="24"/>
        <end position="365"/>
    </location>
</feature>
<sequence>MKKLTVAISAVAASVLMAMSAQAAEIYNKDSNKLDLYGKVNAKHYFSSNDADDGDTTYARLGFKGETQINDQLTGFGQWEYEFKGNRAESQGSSKDKTHLAFAGLKFGDYGSIDYGRNYGVAYDIGAWTDVLPEFGGDTWTQTDVFMTGRTTGFATYRNNDFFGLVDGLNFAAQYQGKNDRSDFDNYTEGNGDGFGFSATYEYEGFGIGATYAKSDRTDTQVNAGKVLPEVFASGKNAEVWAAGLKYDANNIYLATTYSETQNMTVFADHFVANKAQNFEAVAQYQFDFGLRPSVAYLQSKGKDLGVWGDQDLVKYVDVGATYYFNKNMSTFVDYKINLLDKNDFTKALGVSTDDIVAVGLVYQF</sequence>
<protein>
    <recommendedName>
        <fullName>Outer membrane porin protein LC</fullName>
    </recommendedName>
</protein>
<organismHost>
    <name type="scientific">Escherichia coli</name>
    <dbReference type="NCBI Taxonomy" id="562"/>
</organismHost>
<accession>P07238</accession>